<feature type="chain" id="PRO_1000082641" description="UPF0235 protein YggU">
    <location>
        <begin position="1"/>
        <end position="96"/>
    </location>
</feature>
<reference key="1">
    <citation type="submission" date="2008-02" db="EMBL/GenBank/DDBJ databases">
        <title>Complete sequence of Escherichia coli C str. ATCC 8739.</title>
        <authorList>
            <person name="Copeland A."/>
            <person name="Lucas S."/>
            <person name="Lapidus A."/>
            <person name="Glavina del Rio T."/>
            <person name="Dalin E."/>
            <person name="Tice H."/>
            <person name="Bruce D."/>
            <person name="Goodwin L."/>
            <person name="Pitluck S."/>
            <person name="Kiss H."/>
            <person name="Brettin T."/>
            <person name="Detter J.C."/>
            <person name="Han C."/>
            <person name="Kuske C.R."/>
            <person name="Schmutz J."/>
            <person name="Larimer F."/>
            <person name="Land M."/>
            <person name="Hauser L."/>
            <person name="Kyrpides N."/>
            <person name="Mikhailova N."/>
            <person name="Ingram L."/>
            <person name="Richardson P."/>
        </authorList>
    </citation>
    <scope>NUCLEOTIDE SEQUENCE [LARGE SCALE GENOMIC DNA]</scope>
    <source>
        <strain>ATCC 8739 / DSM 1576 / NBRC 3972 / NCIMB 8545 / WDCM 00012 / Crooks</strain>
    </source>
</reference>
<sequence length="96" mass="10429">MSAVTVNDDGLVLRLYIQPKASRDSIVGLHGDEVKVAITAPPVDGQANSHLVKFLGKQFRVAKSQVVIEKGELGRHKQIKIINPQQIPPEIAALIN</sequence>
<dbReference type="EMBL" id="CP000946">
    <property type="protein sequence ID" value="ACA76433.1"/>
    <property type="molecule type" value="Genomic_DNA"/>
</dbReference>
<dbReference type="RefSeq" id="WP_001277222.1">
    <property type="nucleotide sequence ID" value="NZ_MTFT01000004.1"/>
</dbReference>
<dbReference type="BMRB" id="B1IT54"/>
<dbReference type="SMR" id="B1IT54"/>
<dbReference type="GeneID" id="86861043"/>
<dbReference type="KEGG" id="ecl:EcolC_0761"/>
<dbReference type="HOGENOM" id="CLU_130694_5_0_6"/>
<dbReference type="GO" id="GO:0005737">
    <property type="term" value="C:cytoplasm"/>
    <property type="evidence" value="ECO:0007669"/>
    <property type="project" value="TreeGrafter"/>
</dbReference>
<dbReference type="Gene3D" id="3.30.1200.10">
    <property type="entry name" value="YggU-like"/>
    <property type="match status" value="1"/>
</dbReference>
<dbReference type="HAMAP" id="MF_00634">
    <property type="entry name" value="UPF0235"/>
    <property type="match status" value="1"/>
</dbReference>
<dbReference type="InterPro" id="IPR003746">
    <property type="entry name" value="DUF167"/>
</dbReference>
<dbReference type="InterPro" id="IPR036591">
    <property type="entry name" value="YggU-like_sf"/>
</dbReference>
<dbReference type="NCBIfam" id="TIGR00251">
    <property type="entry name" value="DUF167 family protein"/>
    <property type="match status" value="1"/>
</dbReference>
<dbReference type="NCBIfam" id="NF003466">
    <property type="entry name" value="PRK05090.1"/>
    <property type="match status" value="1"/>
</dbReference>
<dbReference type="PANTHER" id="PTHR13420">
    <property type="entry name" value="UPF0235 PROTEIN C15ORF40"/>
    <property type="match status" value="1"/>
</dbReference>
<dbReference type="PANTHER" id="PTHR13420:SF7">
    <property type="entry name" value="UPF0235 PROTEIN C15ORF40"/>
    <property type="match status" value="1"/>
</dbReference>
<dbReference type="Pfam" id="PF02594">
    <property type="entry name" value="DUF167"/>
    <property type="match status" value="1"/>
</dbReference>
<dbReference type="SMART" id="SM01152">
    <property type="entry name" value="DUF167"/>
    <property type="match status" value="1"/>
</dbReference>
<dbReference type="SUPFAM" id="SSF69786">
    <property type="entry name" value="YggU-like"/>
    <property type="match status" value="1"/>
</dbReference>
<organism>
    <name type="scientific">Escherichia coli (strain ATCC 8739 / DSM 1576 / NBRC 3972 / NCIMB 8545 / WDCM 00012 / Crooks)</name>
    <dbReference type="NCBI Taxonomy" id="481805"/>
    <lineage>
        <taxon>Bacteria</taxon>
        <taxon>Pseudomonadati</taxon>
        <taxon>Pseudomonadota</taxon>
        <taxon>Gammaproteobacteria</taxon>
        <taxon>Enterobacterales</taxon>
        <taxon>Enterobacteriaceae</taxon>
        <taxon>Escherichia</taxon>
    </lineage>
</organism>
<comment type="similarity">
    <text evidence="1">Belongs to the UPF0235 family.</text>
</comment>
<evidence type="ECO:0000255" key="1">
    <source>
        <dbReference type="HAMAP-Rule" id="MF_00634"/>
    </source>
</evidence>
<proteinExistence type="inferred from homology"/>
<gene>
    <name evidence="1" type="primary">yggU</name>
    <name type="ordered locus">EcolC_0761</name>
</gene>
<protein>
    <recommendedName>
        <fullName evidence="1">UPF0235 protein YggU</fullName>
    </recommendedName>
</protein>
<accession>B1IT54</accession>
<name>YGGU_ECOLC</name>